<accession>A5CXW2</accession>
<feature type="chain" id="PRO_1000018143" description="Arginine--tRNA ligase">
    <location>
        <begin position="1"/>
        <end position="572"/>
    </location>
</feature>
<feature type="short sequence motif" description="'HIGH' region">
    <location>
        <begin position="127"/>
        <end position="137"/>
    </location>
</feature>
<protein>
    <recommendedName>
        <fullName evidence="1">Arginine--tRNA ligase</fullName>
        <ecNumber evidence="1">6.1.1.19</ecNumber>
    </recommendedName>
    <alternativeName>
        <fullName evidence="1">Arginyl-tRNA synthetase</fullName>
        <shortName evidence="1">ArgRS</shortName>
    </alternativeName>
</protein>
<dbReference type="EC" id="6.1.1.19" evidence="1"/>
<dbReference type="EMBL" id="AP009247">
    <property type="protein sequence ID" value="BAF61221.1"/>
    <property type="molecule type" value="Genomic_DNA"/>
</dbReference>
<dbReference type="RefSeq" id="WP_011929491.1">
    <property type="nucleotide sequence ID" value="NC_009465.1"/>
</dbReference>
<dbReference type="SMR" id="A5CXW2"/>
<dbReference type="STRING" id="412965.COSY_0085"/>
<dbReference type="KEGG" id="vok:COSY_0085"/>
<dbReference type="eggNOG" id="COG0018">
    <property type="taxonomic scope" value="Bacteria"/>
</dbReference>
<dbReference type="HOGENOM" id="CLU_006406_0_1_6"/>
<dbReference type="OrthoDB" id="9803211at2"/>
<dbReference type="Proteomes" id="UP000000247">
    <property type="component" value="Chromosome"/>
</dbReference>
<dbReference type="GO" id="GO:0005737">
    <property type="term" value="C:cytoplasm"/>
    <property type="evidence" value="ECO:0007669"/>
    <property type="project" value="UniProtKB-SubCell"/>
</dbReference>
<dbReference type="GO" id="GO:0004814">
    <property type="term" value="F:arginine-tRNA ligase activity"/>
    <property type="evidence" value="ECO:0007669"/>
    <property type="project" value="UniProtKB-UniRule"/>
</dbReference>
<dbReference type="GO" id="GO:0005524">
    <property type="term" value="F:ATP binding"/>
    <property type="evidence" value="ECO:0007669"/>
    <property type="project" value="UniProtKB-UniRule"/>
</dbReference>
<dbReference type="GO" id="GO:0006420">
    <property type="term" value="P:arginyl-tRNA aminoacylation"/>
    <property type="evidence" value="ECO:0007669"/>
    <property type="project" value="UniProtKB-UniRule"/>
</dbReference>
<dbReference type="CDD" id="cd00671">
    <property type="entry name" value="ArgRS_core"/>
    <property type="match status" value="1"/>
</dbReference>
<dbReference type="FunFam" id="1.10.730.10:FF:000008">
    <property type="entry name" value="Arginine--tRNA ligase"/>
    <property type="match status" value="1"/>
</dbReference>
<dbReference type="FunFam" id="3.40.50.620:FF:000062">
    <property type="entry name" value="Arginine--tRNA ligase"/>
    <property type="match status" value="1"/>
</dbReference>
<dbReference type="Gene3D" id="3.30.1360.70">
    <property type="entry name" value="Arginyl tRNA synthetase N-terminal domain"/>
    <property type="match status" value="1"/>
</dbReference>
<dbReference type="Gene3D" id="3.40.50.620">
    <property type="entry name" value="HUPs"/>
    <property type="match status" value="1"/>
</dbReference>
<dbReference type="Gene3D" id="1.10.730.10">
    <property type="entry name" value="Isoleucyl-tRNA Synthetase, Domain 1"/>
    <property type="match status" value="1"/>
</dbReference>
<dbReference type="HAMAP" id="MF_00123">
    <property type="entry name" value="Arg_tRNA_synth"/>
    <property type="match status" value="1"/>
</dbReference>
<dbReference type="InterPro" id="IPR001412">
    <property type="entry name" value="aa-tRNA-synth_I_CS"/>
</dbReference>
<dbReference type="InterPro" id="IPR001278">
    <property type="entry name" value="Arg-tRNA-ligase"/>
</dbReference>
<dbReference type="InterPro" id="IPR005148">
    <property type="entry name" value="Arg-tRNA-synth_N"/>
</dbReference>
<dbReference type="InterPro" id="IPR036695">
    <property type="entry name" value="Arg-tRNA-synth_N_sf"/>
</dbReference>
<dbReference type="InterPro" id="IPR035684">
    <property type="entry name" value="ArgRS_core"/>
</dbReference>
<dbReference type="InterPro" id="IPR008909">
    <property type="entry name" value="DALR_anticod-bd"/>
</dbReference>
<dbReference type="InterPro" id="IPR014729">
    <property type="entry name" value="Rossmann-like_a/b/a_fold"/>
</dbReference>
<dbReference type="InterPro" id="IPR009080">
    <property type="entry name" value="tRNAsynth_Ia_anticodon-bd"/>
</dbReference>
<dbReference type="NCBIfam" id="TIGR00456">
    <property type="entry name" value="argS"/>
    <property type="match status" value="1"/>
</dbReference>
<dbReference type="PANTHER" id="PTHR11956:SF5">
    <property type="entry name" value="ARGININE--TRNA LIGASE, CYTOPLASMIC"/>
    <property type="match status" value="1"/>
</dbReference>
<dbReference type="PANTHER" id="PTHR11956">
    <property type="entry name" value="ARGINYL-TRNA SYNTHETASE"/>
    <property type="match status" value="1"/>
</dbReference>
<dbReference type="Pfam" id="PF03485">
    <property type="entry name" value="Arg_tRNA_synt_N"/>
    <property type="match status" value="1"/>
</dbReference>
<dbReference type="Pfam" id="PF05746">
    <property type="entry name" value="DALR_1"/>
    <property type="match status" value="1"/>
</dbReference>
<dbReference type="Pfam" id="PF00750">
    <property type="entry name" value="tRNA-synt_1d"/>
    <property type="match status" value="1"/>
</dbReference>
<dbReference type="PRINTS" id="PR01038">
    <property type="entry name" value="TRNASYNTHARG"/>
</dbReference>
<dbReference type="SMART" id="SM01016">
    <property type="entry name" value="Arg_tRNA_synt_N"/>
    <property type="match status" value="1"/>
</dbReference>
<dbReference type="SMART" id="SM00836">
    <property type="entry name" value="DALR_1"/>
    <property type="match status" value="1"/>
</dbReference>
<dbReference type="SUPFAM" id="SSF47323">
    <property type="entry name" value="Anticodon-binding domain of a subclass of class I aminoacyl-tRNA synthetases"/>
    <property type="match status" value="1"/>
</dbReference>
<dbReference type="SUPFAM" id="SSF55190">
    <property type="entry name" value="Arginyl-tRNA synthetase (ArgRS), N-terminal 'additional' domain"/>
    <property type="match status" value="1"/>
</dbReference>
<dbReference type="SUPFAM" id="SSF52374">
    <property type="entry name" value="Nucleotidylyl transferase"/>
    <property type="match status" value="1"/>
</dbReference>
<dbReference type="PROSITE" id="PS00178">
    <property type="entry name" value="AA_TRNA_LIGASE_I"/>
    <property type="match status" value="1"/>
</dbReference>
<evidence type="ECO:0000255" key="1">
    <source>
        <dbReference type="HAMAP-Rule" id="MF_00123"/>
    </source>
</evidence>
<reference key="1">
    <citation type="journal article" date="2007" name="Curr. Biol.">
        <title>Reduced genome of the thioautotrophic intracellular symbiont in a deep-sea clam, Calyptogena okutanii.</title>
        <authorList>
            <person name="Kuwahara H."/>
            <person name="Yoshida T."/>
            <person name="Takaki Y."/>
            <person name="Shimamura S."/>
            <person name="Nishi S."/>
            <person name="Harada M."/>
            <person name="Matsuyama K."/>
            <person name="Takishita K."/>
            <person name="Kawato M."/>
            <person name="Uematsu K."/>
            <person name="Fujiwara Y."/>
            <person name="Sato T."/>
            <person name="Kato C."/>
            <person name="Kitagawa M."/>
            <person name="Kato I."/>
            <person name="Maruyama T."/>
        </authorList>
    </citation>
    <scope>NUCLEOTIDE SEQUENCE [LARGE SCALE GENOMIC DNA]</scope>
    <source>
        <strain>HA</strain>
    </source>
</reference>
<proteinExistence type="inferred from homology"/>
<sequence>MKQLLQQLLVQSLEVLMDNNILESMPENIRVDHSKDKAQGDFASNIAMLLSEQAQCSSKVLAQKIKANFPDSVDVEKIEIVGPGFINFFMSQSSNALVVEDIIKQGGNYGLSNIGMGQRVLLEFVSANPTGPLHVGHGRGVAYGAAVAHLLRAVGFEVDCEYYVNDAGRQMDILAISVYLRYVETEQFPDNCYKGDYIFDIAKKISGVKKLDIFTNTCKDTSEWKVQKNSIDKERYIDDLIANCKLQLGSDYRKVFDFAINSILSDIKIDLADFGVEYHQWFSEQSLVDSGLSEEIVKKLQDLGYIYEKEGALWFRTTDFGDDLDRVVVRDNGIHTYFSYDIAYHLGKFERGYDRIINIWGADHHGYIARVKASIKALNYNPDKLEILLVQFVNLFRDGKKVSMSTRSGSFITLKELREEVGNDVVRFFYILRKSTQHMDFNLDLAKSKSNENPVFYIQYAYVRICSVLKQGMPFMADIDLLVLNNELETLLIKELNRYKDILQSSALNYEPHVLACYLRKLAGYFHSYYNNCEFLVDDDKLRNSRLLLITAVQQILANGLNLLGISTPNSM</sequence>
<gene>
    <name evidence="1" type="primary">argS</name>
    <name type="ordered locus">COSY_0085</name>
</gene>
<comment type="catalytic activity">
    <reaction evidence="1">
        <text>tRNA(Arg) + L-arginine + ATP = L-arginyl-tRNA(Arg) + AMP + diphosphate</text>
        <dbReference type="Rhea" id="RHEA:20301"/>
        <dbReference type="Rhea" id="RHEA-COMP:9658"/>
        <dbReference type="Rhea" id="RHEA-COMP:9673"/>
        <dbReference type="ChEBI" id="CHEBI:30616"/>
        <dbReference type="ChEBI" id="CHEBI:32682"/>
        <dbReference type="ChEBI" id="CHEBI:33019"/>
        <dbReference type="ChEBI" id="CHEBI:78442"/>
        <dbReference type="ChEBI" id="CHEBI:78513"/>
        <dbReference type="ChEBI" id="CHEBI:456215"/>
        <dbReference type="EC" id="6.1.1.19"/>
    </reaction>
</comment>
<comment type="subunit">
    <text evidence="1">Monomer.</text>
</comment>
<comment type="subcellular location">
    <subcellularLocation>
        <location evidence="1">Cytoplasm</location>
    </subcellularLocation>
</comment>
<comment type="similarity">
    <text evidence="1">Belongs to the class-I aminoacyl-tRNA synthetase family.</text>
</comment>
<organism>
    <name type="scientific">Vesicomyosocius okutanii subsp. Calyptogena okutanii (strain HA)</name>
    <dbReference type="NCBI Taxonomy" id="412965"/>
    <lineage>
        <taxon>Bacteria</taxon>
        <taxon>Pseudomonadati</taxon>
        <taxon>Pseudomonadota</taxon>
        <taxon>Gammaproteobacteria</taxon>
        <taxon>Candidatus Pseudothioglobaceae</taxon>
        <taxon>Candidatus Vesicomyosocius</taxon>
    </lineage>
</organism>
<keyword id="KW-0030">Aminoacyl-tRNA synthetase</keyword>
<keyword id="KW-0067">ATP-binding</keyword>
<keyword id="KW-0963">Cytoplasm</keyword>
<keyword id="KW-0436">Ligase</keyword>
<keyword id="KW-0547">Nucleotide-binding</keyword>
<keyword id="KW-0648">Protein biosynthesis</keyword>
<keyword id="KW-1185">Reference proteome</keyword>
<name>SYR_VESOH</name>